<feature type="chain" id="PRO_0000418149" description="Protein phosphatase PhpP">
    <location>
        <begin position="1"/>
        <end position="246"/>
    </location>
</feature>
<feature type="domain" description="PPM-type phosphatase" evidence="2">
    <location>
        <begin position="2"/>
        <end position="240"/>
    </location>
</feature>
<feature type="binding site" evidence="1">
    <location>
        <position position="36"/>
    </location>
    <ligand>
        <name>Mn(2+)</name>
        <dbReference type="ChEBI" id="CHEBI:29035"/>
        <label>1</label>
    </ligand>
</feature>
<feature type="binding site" evidence="1">
    <location>
        <position position="36"/>
    </location>
    <ligand>
        <name>Mn(2+)</name>
        <dbReference type="ChEBI" id="CHEBI:29035"/>
        <label>2</label>
    </ligand>
</feature>
<feature type="binding site" evidence="1">
    <location>
        <position position="37"/>
    </location>
    <ligand>
        <name>Mn(2+)</name>
        <dbReference type="ChEBI" id="CHEBI:29035"/>
        <label>1</label>
    </ligand>
</feature>
<feature type="binding site" evidence="1">
    <location>
        <position position="192"/>
    </location>
    <ligand>
        <name>Mn(2+)</name>
        <dbReference type="ChEBI" id="CHEBI:29035"/>
        <label>2</label>
    </ligand>
</feature>
<feature type="binding site" evidence="1">
    <location>
        <position position="231"/>
    </location>
    <ligand>
        <name>Mn(2+)</name>
        <dbReference type="ChEBI" id="CHEBI:29035"/>
        <label>2</label>
    </ligand>
</feature>
<keyword id="KW-0963">Cytoplasm</keyword>
<keyword id="KW-0378">Hydrolase</keyword>
<keyword id="KW-0464">Manganese</keyword>
<keyword id="KW-0479">Metal-binding</keyword>
<keyword id="KW-0904">Protein phosphatase</keyword>
<keyword id="KW-1185">Reference proteome</keyword>
<comment type="function">
    <text evidence="1 3">Protein phosphatase able to dephosphorylate StkP-P and other phosphorylated protein substrates. PhpP and its cognate protein kinase StkP appear to constitute a functional signaling couple in vivo, PhpP's primary role being probably to control phosphorylation levels of StkP and of its targets. PhpP thus performs an essential control of StkP activity (By similarity). Also dephosphorylates DivIVA in vivo.</text>
</comment>
<comment type="catalytic activity">
    <reaction evidence="3">
        <text>O-phospho-L-seryl-[protein] + H2O = L-seryl-[protein] + phosphate</text>
        <dbReference type="Rhea" id="RHEA:20629"/>
        <dbReference type="Rhea" id="RHEA-COMP:9863"/>
        <dbReference type="Rhea" id="RHEA-COMP:11604"/>
        <dbReference type="ChEBI" id="CHEBI:15377"/>
        <dbReference type="ChEBI" id="CHEBI:29999"/>
        <dbReference type="ChEBI" id="CHEBI:43474"/>
        <dbReference type="ChEBI" id="CHEBI:83421"/>
        <dbReference type="EC" id="3.1.3.16"/>
    </reaction>
</comment>
<comment type="catalytic activity">
    <reaction evidence="3">
        <text>O-phospho-L-threonyl-[protein] + H2O = L-threonyl-[protein] + phosphate</text>
        <dbReference type="Rhea" id="RHEA:47004"/>
        <dbReference type="Rhea" id="RHEA-COMP:11060"/>
        <dbReference type="Rhea" id="RHEA-COMP:11605"/>
        <dbReference type="ChEBI" id="CHEBI:15377"/>
        <dbReference type="ChEBI" id="CHEBI:30013"/>
        <dbReference type="ChEBI" id="CHEBI:43474"/>
        <dbReference type="ChEBI" id="CHEBI:61977"/>
        <dbReference type="EC" id="3.1.3.16"/>
    </reaction>
</comment>
<comment type="cofactor">
    <cofactor evidence="1">
        <name>Mn(2+)</name>
        <dbReference type="ChEBI" id="CHEBI:29035"/>
    </cofactor>
    <text evidence="1">Binds 2 manganese ions per subunit.</text>
</comment>
<comment type="subcellular location">
    <subcellularLocation>
        <location evidence="3">Cytoplasm</location>
    </subcellularLocation>
    <text>Mainly localizes to the midcell division sites in a StkP-dependent manner, since PhpP is present at midcell only when StkP is active.</text>
</comment>
<comment type="similarity">
    <text evidence="4">Belongs to the PP2C family.</text>
</comment>
<sequence length="246" mass="27103">MEISLLTDVGQKRTNNQDYVNHYVNRAGRTMIILADGMGGHRAGNIASEMAVTDLGVAWVDTQIDTVNEVREWFAHYLEIENQKIHQLGQDEAYRGMGTTLEVLAIIDNQAIYAHIGDSRIGLIRGEEYHQLTSDHSLVNELLKAGQLTPEEAEAHPQKNIITQSIGQKDEIQPDFGTVILESGDYLLLNSDGLTNMISGSEIRDIVTSDIPLADKTETLVRFANNAGGLDNITVALVSMNEEDAE</sequence>
<protein>
    <recommendedName>
        <fullName>Protein phosphatase PhpP</fullName>
        <ecNumber>3.1.3.16</ecNumber>
    </recommendedName>
    <alternativeName>
        <fullName>PP2C-type phosphatase</fullName>
    </alternativeName>
    <alternativeName>
        <fullName>Ser/Thr phosphoprotein phosphatase</fullName>
        <shortName>STPP</shortName>
    </alternativeName>
</protein>
<proteinExistence type="evidence at protein level"/>
<name>PHPP_STRP2</name>
<organism>
    <name type="scientific">Streptococcus pneumoniae serotype 2 (strain D39 / NCTC 7466)</name>
    <dbReference type="NCBI Taxonomy" id="373153"/>
    <lineage>
        <taxon>Bacteria</taxon>
        <taxon>Bacillati</taxon>
        <taxon>Bacillota</taxon>
        <taxon>Bacilli</taxon>
        <taxon>Lactobacillales</taxon>
        <taxon>Streptococcaceae</taxon>
        <taxon>Streptococcus</taxon>
    </lineage>
</organism>
<evidence type="ECO:0000250" key="1"/>
<evidence type="ECO:0000255" key="2">
    <source>
        <dbReference type="PROSITE-ProRule" id="PRU01082"/>
    </source>
</evidence>
<evidence type="ECO:0000269" key="3">
    <source>
    </source>
</evidence>
<evidence type="ECO:0000305" key="4"/>
<reference key="1">
    <citation type="journal article" date="2007" name="J. Bacteriol.">
        <title>Genome sequence of Avery's virulent serotype 2 strain D39 of Streptococcus pneumoniae and comparison with that of unencapsulated laboratory strain R6.</title>
        <authorList>
            <person name="Lanie J.A."/>
            <person name="Ng W.-L."/>
            <person name="Kazmierczak K.M."/>
            <person name="Andrzejewski T.M."/>
            <person name="Davidsen T.M."/>
            <person name="Wayne K.J."/>
            <person name="Tettelin H."/>
            <person name="Glass J.I."/>
            <person name="Winkler M.E."/>
        </authorList>
    </citation>
    <scope>NUCLEOTIDE SEQUENCE [LARGE SCALE GENOMIC DNA]</scope>
    <source>
        <strain>D39 / NCTC 7466</strain>
    </source>
</reference>
<reference key="2">
    <citation type="journal article" date="2012" name="Proc. Natl. Acad. Sci. U.S.A.">
        <title>Control of cell division in Streptococcus pneumoniae by the conserved Ser/Thr protein kinase StkP.</title>
        <authorList>
            <person name="Beilharz K."/>
            <person name="Novakova L."/>
            <person name="Fadda D."/>
            <person name="Branny P."/>
            <person name="Massidda O."/>
            <person name="Veening J.W."/>
        </authorList>
    </citation>
    <scope>FUNCTION</scope>
    <scope>CATALYTIC ACTIVITY</scope>
    <scope>SUBCELLULAR LOCATION</scope>
    <source>
        <strain>D39 / NCTC 7466</strain>
    </source>
</reference>
<accession>Q04J42</accession>
<gene>
    <name type="primary">phpP</name>
    <name type="ordered locus">SPD_1543</name>
</gene>
<dbReference type="EC" id="3.1.3.16"/>
<dbReference type="EMBL" id="CP000410">
    <property type="protein sequence ID" value="ABJ54228.1"/>
    <property type="molecule type" value="Genomic_DNA"/>
</dbReference>
<dbReference type="RefSeq" id="WP_000406247.1">
    <property type="nucleotide sequence ID" value="NZ_JAMLJR010000003.1"/>
</dbReference>
<dbReference type="SMR" id="Q04J42"/>
<dbReference type="PaxDb" id="373153-SPD_1543"/>
<dbReference type="KEGG" id="spd:SPD_1543"/>
<dbReference type="eggNOG" id="COG0631">
    <property type="taxonomic scope" value="Bacteria"/>
</dbReference>
<dbReference type="HOGENOM" id="CLU_034545_4_1_9"/>
<dbReference type="BioCyc" id="SPNE373153:G1G6V-1666-MONOMER"/>
<dbReference type="Proteomes" id="UP000001452">
    <property type="component" value="Chromosome"/>
</dbReference>
<dbReference type="GO" id="GO:0005737">
    <property type="term" value="C:cytoplasm"/>
    <property type="evidence" value="ECO:0007669"/>
    <property type="project" value="UniProtKB-SubCell"/>
</dbReference>
<dbReference type="GO" id="GO:0046872">
    <property type="term" value="F:metal ion binding"/>
    <property type="evidence" value="ECO:0007669"/>
    <property type="project" value="UniProtKB-KW"/>
</dbReference>
<dbReference type="GO" id="GO:0004722">
    <property type="term" value="F:protein serine/threonine phosphatase activity"/>
    <property type="evidence" value="ECO:0007669"/>
    <property type="project" value="UniProtKB-EC"/>
</dbReference>
<dbReference type="CDD" id="cd00143">
    <property type="entry name" value="PP2Cc"/>
    <property type="match status" value="1"/>
</dbReference>
<dbReference type="FunFam" id="3.60.40.10:FF:000002">
    <property type="entry name" value="Serine/threonine phosphatase stp"/>
    <property type="match status" value="1"/>
</dbReference>
<dbReference type="Gene3D" id="3.60.40.10">
    <property type="entry name" value="PPM-type phosphatase domain"/>
    <property type="match status" value="1"/>
</dbReference>
<dbReference type="InterPro" id="IPR015655">
    <property type="entry name" value="PP2C"/>
</dbReference>
<dbReference type="InterPro" id="IPR036457">
    <property type="entry name" value="PPM-type-like_dom_sf"/>
</dbReference>
<dbReference type="InterPro" id="IPR001932">
    <property type="entry name" value="PPM-type_phosphatase-like_dom"/>
</dbReference>
<dbReference type="NCBIfam" id="NF033484">
    <property type="entry name" value="Stp1_PP2C_phos"/>
    <property type="match status" value="1"/>
</dbReference>
<dbReference type="PANTHER" id="PTHR47992">
    <property type="entry name" value="PROTEIN PHOSPHATASE"/>
    <property type="match status" value="1"/>
</dbReference>
<dbReference type="Pfam" id="PF13672">
    <property type="entry name" value="PP2C_2"/>
    <property type="match status" value="1"/>
</dbReference>
<dbReference type="SMART" id="SM00331">
    <property type="entry name" value="PP2C_SIG"/>
    <property type="match status" value="1"/>
</dbReference>
<dbReference type="SMART" id="SM00332">
    <property type="entry name" value="PP2Cc"/>
    <property type="match status" value="1"/>
</dbReference>
<dbReference type="SUPFAM" id="SSF81606">
    <property type="entry name" value="PP2C-like"/>
    <property type="match status" value="1"/>
</dbReference>
<dbReference type="PROSITE" id="PS51746">
    <property type="entry name" value="PPM_2"/>
    <property type="match status" value="1"/>
</dbReference>